<reference key="1">
    <citation type="submission" date="2005-10" db="EMBL/GenBank/DDBJ databases">
        <title>Complete sequence of chromosome 1 of Burkholderia sp. 383.</title>
        <authorList>
            <consortium name="US DOE Joint Genome Institute"/>
            <person name="Copeland A."/>
            <person name="Lucas S."/>
            <person name="Lapidus A."/>
            <person name="Barry K."/>
            <person name="Detter J.C."/>
            <person name="Glavina T."/>
            <person name="Hammon N."/>
            <person name="Israni S."/>
            <person name="Pitluck S."/>
            <person name="Chain P."/>
            <person name="Malfatti S."/>
            <person name="Shin M."/>
            <person name="Vergez L."/>
            <person name="Schmutz J."/>
            <person name="Larimer F."/>
            <person name="Land M."/>
            <person name="Kyrpides N."/>
            <person name="Lykidis A."/>
            <person name="Richardson P."/>
        </authorList>
    </citation>
    <scope>NUCLEOTIDE SEQUENCE [LARGE SCALE GENOMIC DNA]</scope>
    <source>
        <strain>ATCC 17760 / DSM 23089 / LMG 22485 / NCIMB 9086 / R18194 / 383</strain>
    </source>
</reference>
<name>AROK_BURL3</name>
<comment type="function">
    <text evidence="1">Catalyzes the specific phosphorylation of the 3-hydroxyl group of shikimic acid using ATP as a cosubstrate.</text>
</comment>
<comment type="catalytic activity">
    <reaction evidence="1">
        <text>shikimate + ATP = 3-phosphoshikimate + ADP + H(+)</text>
        <dbReference type="Rhea" id="RHEA:13121"/>
        <dbReference type="ChEBI" id="CHEBI:15378"/>
        <dbReference type="ChEBI" id="CHEBI:30616"/>
        <dbReference type="ChEBI" id="CHEBI:36208"/>
        <dbReference type="ChEBI" id="CHEBI:145989"/>
        <dbReference type="ChEBI" id="CHEBI:456216"/>
        <dbReference type="EC" id="2.7.1.71"/>
    </reaction>
</comment>
<comment type="cofactor">
    <cofactor evidence="1">
        <name>Mg(2+)</name>
        <dbReference type="ChEBI" id="CHEBI:18420"/>
    </cofactor>
    <text evidence="1">Binds 1 Mg(2+) ion per subunit.</text>
</comment>
<comment type="pathway">
    <text evidence="1">Metabolic intermediate biosynthesis; chorismate biosynthesis; chorismate from D-erythrose 4-phosphate and phosphoenolpyruvate: step 5/7.</text>
</comment>
<comment type="subunit">
    <text evidence="1">Monomer.</text>
</comment>
<comment type="subcellular location">
    <subcellularLocation>
        <location evidence="1">Cytoplasm</location>
    </subcellularLocation>
</comment>
<comment type="similarity">
    <text evidence="1">Belongs to the shikimate kinase family.</text>
</comment>
<dbReference type="EC" id="2.7.1.71" evidence="1"/>
<dbReference type="EMBL" id="CP000151">
    <property type="protein sequence ID" value="ABB07091.1"/>
    <property type="molecule type" value="Genomic_DNA"/>
</dbReference>
<dbReference type="RefSeq" id="WP_011350694.1">
    <property type="nucleotide sequence ID" value="NC_007510.1"/>
</dbReference>
<dbReference type="SMR" id="Q39KC5"/>
<dbReference type="GeneID" id="45093406"/>
<dbReference type="KEGG" id="bur:Bcep18194_A3489"/>
<dbReference type="PATRIC" id="fig|482957.22.peg.332"/>
<dbReference type="HOGENOM" id="CLU_057607_2_2_4"/>
<dbReference type="UniPathway" id="UPA00053">
    <property type="reaction ID" value="UER00088"/>
</dbReference>
<dbReference type="Proteomes" id="UP000002705">
    <property type="component" value="Chromosome 1"/>
</dbReference>
<dbReference type="GO" id="GO:0005829">
    <property type="term" value="C:cytosol"/>
    <property type="evidence" value="ECO:0007669"/>
    <property type="project" value="TreeGrafter"/>
</dbReference>
<dbReference type="GO" id="GO:0005524">
    <property type="term" value="F:ATP binding"/>
    <property type="evidence" value="ECO:0007669"/>
    <property type="project" value="UniProtKB-UniRule"/>
</dbReference>
<dbReference type="GO" id="GO:0000287">
    <property type="term" value="F:magnesium ion binding"/>
    <property type="evidence" value="ECO:0007669"/>
    <property type="project" value="UniProtKB-UniRule"/>
</dbReference>
<dbReference type="GO" id="GO:0004765">
    <property type="term" value="F:shikimate kinase activity"/>
    <property type="evidence" value="ECO:0007669"/>
    <property type="project" value="UniProtKB-UniRule"/>
</dbReference>
<dbReference type="GO" id="GO:0008652">
    <property type="term" value="P:amino acid biosynthetic process"/>
    <property type="evidence" value="ECO:0007669"/>
    <property type="project" value="UniProtKB-KW"/>
</dbReference>
<dbReference type="GO" id="GO:0009073">
    <property type="term" value="P:aromatic amino acid family biosynthetic process"/>
    <property type="evidence" value="ECO:0007669"/>
    <property type="project" value="UniProtKB-KW"/>
</dbReference>
<dbReference type="GO" id="GO:0009423">
    <property type="term" value="P:chorismate biosynthetic process"/>
    <property type="evidence" value="ECO:0007669"/>
    <property type="project" value="UniProtKB-UniRule"/>
</dbReference>
<dbReference type="CDD" id="cd00464">
    <property type="entry name" value="SK"/>
    <property type="match status" value="1"/>
</dbReference>
<dbReference type="Gene3D" id="3.40.50.300">
    <property type="entry name" value="P-loop containing nucleotide triphosphate hydrolases"/>
    <property type="match status" value="1"/>
</dbReference>
<dbReference type="HAMAP" id="MF_00109">
    <property type="entry name" value="Shikimate_kinase"/>
    <property type="match status" value="1"/>
</dbReference>
<dbReference type="InterPro" id="IPR027417">
    <property type="entry name" value="P-loop_NTPase"/>
</dbReference>
<dbReference type="InterPro" id="IPR031322">
    <property type="entry name" value="Shikimate/glucono_kinase"/>
</dbReference>
<dbReference type="InterPro" id="IPR000623">
    <property type="entry name" value="Shikimate_kinase/TSH1"/>
</dbReference>
<dbReference type="InterPro" id="IPR023000">
    <property type="entry name" value="Shikimate_kinase_CS"/>
</dbReference>
<dbReference type="PANTHER" id="PTHR21087">
    <property type="entry name" value="SHIKIMATE KINASE"/>
    <property type="match status" value="1"/>
</dbReference>
<dbReference type="PANTHER" id="PTHR21087:SF16">
    <property type="entry name" value="SHIKIMATE KINASE 1, CHLOROPLASTIC"/>
    <property type="match status" value="1"/>
</dbReference>
<dbReference type="Pfam" id="PF01202">
    <property type="entry name" value="SKI"/>
    <property type="match status" value="1"/>
</dbReference>
<dbReference type="PRINTS" id="PR01100">
    <property type="entry name" value="SHIKIMTKNASE"/>
</dbReference>
<dbReference type="SUPFAM" id="SSF52540">
    <property type="entry name" value="P-loop containing nucleoside triphosphate hydrolases"/>
    <property type="match status" value="1"/>
</dbReference>
<dbReference type="PROSITE" id="PS01128">
    <property type="entry name" value="SHIKIMATE_KINASE"/>
    <property type="match status" value="1"/>
</dbReference>
<sequence>MQARDPHANVFFVGLMGAGKTTVGRAVARRLDRTFFDSDHEIEARTGARIPVIFEMEGEAGFRDRETQVITDLTQRENIVLATGGGAVLRPENRDCLKNNGIVVYLRANPHDLWLRTRKDKNRPLLQTEDPKGRLEALYEVRDPLYRECADFVIETGRPSVNGLVNMVLMQLELAGVIAKPLQA</sequence>
<keyword id="KW-0028">Amino-acid biosynthesis</keyword>
<keyword id="KW-0057">Aromatic amino acid biosynthesis</keyword>
<keyword id="KW-0067">ATP-binding</keyword>
<keyword id="KW-0963">Cytoplasm</keyword>
<keyword id="KW-0418">Kinase</keyword>
<keyword id="KW-0460">Magnesium</keyword>
<keyword id="KW-0479">Metal-binding</keyword>
<keyword id="KW-0547">Nucleotide-binding</keyword>
<keyword id="KW-0808">Transferase</keyword>
<protein>
    <recommendedName>
        <fullName evidence="1">Shikimate kinase</fullName>
        <shortName evidence="1">SK</shortName>
        <ecNumber evidence="1">2.7.1.71</ecNumber>
    </recommendedName>
</protein>
<accession>Q39KC5</accession>
<organism>
    <name type="scientific">Burkholderia lata (strain ATCC 17760 / DSM 23089 / LMG 22485 / NCIMB 9086 / R18194 / 383)</name>
    <dbReference type="NCBI Taxonomy" id="482957"/>
    <lineage>
        <taxon>Bacteria</taxon>
        <taxon>Pseudomonadati</taxon>
        <taxon>Pseudomonadota</taxon>
        <taxon>Betaproteobacteria</taxon>
        <taxon>Burkholderiales</taxon>
        <taxon>Burkholderiaceae</taxon>
        <taxon>Burkholderia</taxon>
        <taxon>Burkholderia cepacia complex</taxon>
    </lineage>
</organism>
<evidence type="ECO:0000255" key="1">
    <source>
        <dbReference type="HAMAP-Rule" id="MF_00109"/>
    </source>
</evidence>
<feature type="chain" id="PRO_0000237860" description="Shikimate kinase">
    <location>
        <begin position="1"/>
        <end position="184"/>
    </location>
</feature>
<feature type="binding site" evidence="1">
    <location>
        <begin position="17"/>
        <end position="22"/>
    </location>
    <ligand>
        <name>ATP</name>
        <dbReference type="ChEBI" id="CHEBI:30616"/>
    </ligand>
</feature>
<feature type="binding site" evidence="1">
    <location>
        <position position="21"/>
    </location>
    <ligand>
        <name>Mg(2+)</name>
        <dbReference type="ChEBI" id="CHEBI:18420"/>
    </ligand>
</feature>
<feature type="binding site" evidence="1">
    <location>
        <position position="39"/>
    </location>
    <ligand>
        <name>substrate</name>
    </ligand>
</feature>
<feature type="binding site" evidence="1">
    <location>
        <position position="63"/>
    </location>
    <ligand>
        <name>substrate</name>
    </ligand>
</feature>
<feature type="binding site" evidence="1">
    <location>
        <position position="85"/>
    </location>
    <ligand>
        <name>substrate</name>
    </ligand>
</feature>
<feature type="binding site" evidence="1">
    <location>
        <position position="123"/>
    </location>
    <ligand>
        <name>ATP</name>
        <dbReference type="ChEBI" id="CHEBI:30616"/>
    </ligand>
</feature>
<feature type="binding site" evidence="1">
    <location>
        <position position="142"/>
    </location>
    <ligand>
        <name>substrate</name>
    </ligand>
</feature>
<proteinExistence type="inferred from homology"/>
<gene>
    <name evidence="1" type="primary">aroK</name>
    <name type="ordered locus">Bcep18194_A3489</name>
</gene>